<dbReference type="EC" id="7.1.1.-" evidence="1"/>
<dbReference type="EMBL" id="AY243565">
    <property type="protein sequence ID" value="AAO72305.1"/>
    <property type="molecule type" value="Genomic_DNA"/>
</dbReference>
<dbReference type="EMBL" id="EF115541">
    <property type="protein sequence ID" value="ABK79418.1"/>
    <property type="molecule type" value="Genomic_DNA"/>
</dbReference>
<dbReference type="RefSeq" id="YP_010144430.1">
    <property type="nucleotide sequence ID" value="NC_056985.1"/>
</dbReference>
<dbReference type="RefSeq" id="YP_874658.1">
    <property type="nucleotide sequence ID" value="NC_008590.1"/>
</dbReference>
<dbReference type="PDB" id="7EU3">
    <property type="method" value="EM"/>
    <property type="resolution" value="3.70 A"/>
    <property type="chains" value="C=4-120"/>
</dbReference>
<dbReference type="PDBsum" id="7EU3"/>
<dbReference type="SMR" id="A1E9J6"/>
<dbReference type="GeneID" id="4525142"/>
<dbReference type="GeneID" id="67140639"/>
<dbReference type="GO" id="GO:0009535">
    <property type="term" value="C:chloroplast thylakoid membrane"/>
    <property type="evidence" value="ECO:0007669"/>
    <property type="project" value="UniProtKB-SubCell"/>
</dbReference>
<dbReference type="GO" id="GO:0030964">
    <property type="term" value="C:NADH dehydrogenase complex"/>
    <property type="evidence" value="ECO:0007669"/>
    <property type="project" value="TreeGrafter"/>
</dbReference>
<dbReference type="GO" id="GO:0008137">
    <property type="term" value="F:NADH dehydrogenase (ubiquinone) activity"/>
    <property type="evidence" value="ECO:0007669"/>
    <property type="project" value="InterPro"/>
</dbReference>
<dbReference type="GO" id="GO:0048038">
    <property type="term" value="F:quinone binding"/>
    <property type="evidence" value="ECO:0007669"/>
    <property type="project" value="UniProtKB-KW"/>
</dbReference>
<dbReference type="GO" id="GO:0019684">
    <property type="term" value="P:photosynthesis, light reaction"/>
    <property type="evidence" value="ECO:0007669"/>
    <property type="project" value="UniProtKB-UniRule"/>
</dbReference>
<dbReference type="FunFam" id="1.20.58.1610:FF:000001">
    <property type="entry name" value="NAD(P)H-quinone oxidoreductase subunit 3, chloroplastic"/>
    <property type="match status" value="1"/>
</dbReference>
<dbReference type="Gene3D" id="1.20.58.1610">
    <property type="entry name" value="NADH:ubiquinone/plastoquinone oxidoreductase, chain 3"/>
    <property type="match status" value="1"/>
</dbReference>
<dbReference type="HAMAP" id="MF_01394">
    <property type="entry name" value="NDH1_NuoA"/>
    <property type="match status" value="1"/>
</dbReference>
<dbReference type="InterPro" id="IPR023043">
    <property type="entry name" value="NAD(P)H_OxRDtase_bac/plastid"/>
</dbReference>
<dbReference type="InterPro" id="IPR000440">
    <property type="entry name" value="NADH_UbQ/plastoQ_OxRdtase_su3"/>
</dbReference>
<dbReference type="InterPro" id="IPR038430">
    <property type="entry name" value="NDAH_ubi_oxred_su3_sf"/>
</dbReference>
<dbReference type="PANTHER" id="PTHR11058">
    <property type="entry name" value="NADH-UBIQUINONE OXIDOREDUCTASE CHAIN 3"/>
    <property type="match status" value="1"/>
</dbReference>
<dbReference type="PANTHER" id="PTHR11058:SF9">
    <property type="entry name" value="NADH-UBIQUINONE OXIDOREDUCTASE CHAIN 3"/>
    <property type="match status" value="1"/>
</dbReference>
<dbReference type="Pfam" id="PF00507">
    <property type="entry name" value="Oxidored_q4"/>
    <property type="match status" value="1"/>
</dbReference>
<organism>
    <name type="scientific">Hordeum vulgare</name>
    <name type="common">Barley</name>
    <dbReference type="NCBI Taxonomy" id="4513"/>
    <lineage>
        <taxon>Eukaryota</taxon>
        <taxon>Viridiplantae</taxon>
        <taxon>Streptophyta</taxon>
        <taxon>Embryophyta</taxon>
        <taxon>Tracheophyta</taxon>
        <taxon>Spermatophyta</taxon>
        <taxon>Magnoliopsida</taxon>
        <taxon>Liliopsida</taxon>
        <taxon>Poales</taxon>
        <taxon>Poaceae</taxon>
        <taxon>BOP clade</taxon>
        <taxon>Pooideae</taxon>
        <taxon>Triticodae</taxon>
        <taxon>Triticeae</taxon>
        <taxon>Hordeinae</taxon>
        <taxon>Hordeum</taxon>
    </lineage>
</organism>
<geneLocation type="chloroplast"/>
<evidence type="ECO:0000255" key="1">
    <source>
        <dbReference type="HAMAP-Rule" id="MF_01394"/>
    </source>
</evidence>
<evidence type="ECO:0000305" key="2"/>
<name>NU3C_HORVU</name>
<sequence length="120" mass="13685">MFLLHEYDIFWTFLIIASLIPILAFSISGLLAPVSEGPEKLSSYESGIEPMGGAWVQFRIRYYMFALVFVVFDVETVFLYPWAMSFDVLGVSVFIEALIFVLILVVGLVYAWRKGALEWS</sequence>
<feature type="chain" id="PRO_0000362838" description="NAD(P)H-quinone oxidoreductase subunit 3, chloroplastic">
    <location>
        <begin position="1"/>
        <end position="120"/>
    </location>
</feature>
<feature type="transmembrane region" description="Helical" evidence="1">
    <location>
        <begin position="9"/>
        <end position="29"/>
    </location>
</feature>
<feature type="transmembrane region" description="Helical" evidence="1">
    <location>
        <begin position="64"/>
        <end position="84"/>
    </location>
</feature>
<feature type="transmembrane region" description="Helical" evidence="1">
    <location>
        <begin position="88"/>
        <end position="108"/>
    </location>
</feature>
<feature type="sequence conflict" description="In Ref. 1; AAO72305." evidence="2" ref="1">
    <original>H</original>
    <variation>Y</variation>
    <location>
        <position position="5"/>
    </location>
</feature>
<gene>
    <name evidence="1" type="primary">ndhC</name>
</gene>
<reference key="1">
    <citation type="submission" date="2003-02" db="EMBL/GenBank/DDBJ databases">
        <title>Barley chloroplast ndhC,K,J operon.</title>
        <authorList>
            <person name="Serrot P.H."/>
            <person name="Sabater B."/>
            <person name="Martin M."/>
        </authorList>
    </citation>
    <scope>NUCLEOTIDE SEQUENCE [GENOMIC DNA]</scope>
</reference>
<reference key="2">
    <citation type="journal article" date="2007" name="Theor. Appl. Genet.">
        <title>Complete chloroplast genome sequences of Hordeum vulgare, Sorghum bicolor and Agrostis stolonifera, and comparative analyses with other grass genomes.</title>
        <authorList>
            <person name="Saski C."/>
            <person name="Lee S.-B."/>
            <person name="Fjellheim S."/>
            <person name="Guda C."/>
            <person name="Jansen R.K."/>
            <person name="Luo H."/>
            <person name="Tomkins J."/>
            <person name="Rognli O.A."/>
            <person name="Daniell H."/>
            <person name="Clarke J.L."/>
        </authorList>
    </citation>
    <scope>NUCLEOTIDE SEQUENCE [LARGE SCALE GENOMIC DNA]</scope>
    <source>
        <strain>cv. Morex</strain>
    </source>
</reference>
<protein>
    <recommendedName>
        <fullName evidence="1">NAD(P)H-quinone oxidoreductase subunit 3, chloroplastic</fullName>
        <ecNumber evidence="1">7.1.1.-</ecNumber>
    </recommendedName>
    <alternativeName>
        <fullName evidence="1">NAD(P)H dehydrogenase subunit 3</fullName>
    </alternativeName>
    <alternativeName>
        <fullName evidence="1">NADH-plastoquinone oxidoreductase subunit 3</fullName>
    </alternativeName>
</protein>
<comment type="function">
    <text evidence="1">NDH shuttles electrons from NAD(P)H:plastoquinone, via FMN and iron-sulfur (Fe-S) centers, to quinones in the photosynthetic chain and possibly in a chloroplast respiratory chain. The immediate electron acceptor for the enzyme in this species is believed to be plastoquinone. Couples the redox reaction to proton translocation, and thus conserves the redox energy in a proton gradient.</text>
</comment>
<comment type="catalytic activity">
    <reaction evidence="1">
        <text>a plastoquinone + NADH + (n+1) H(+)(in) = a plastoquinol + NAD(+) + n H(+)(out)</text>
        <dbReference type="Rhea" id="RHEA:42608"/>
        <dbReference type="Rhea" id="RHEA-COMP:9561"/>
        <dbReference type="Rhea" id="RHEA-COMP:9562"/>
        <dbReference type="ChEBI" id="CHEBI:15378"/>
        <dbReference type="ChEBI" id="CHEBI:17757"/>
        <dbReference type="ChEBI" id="CHEBI:57540"/>
        <dbReference type="ChEBI" id="CHEBI:57945"/>
        <dbReference type="ChEBI" id="CHEBI:62192"/>
    </reaction>
</comment>
<comment type="catalytic activity">
    <reaction evidence="1">
        <text>a plastoquinone + NADPH + (n+1) H(+)(in) = a plastoquinol + NADP(+) + n H(+)(out)</text>
        <dbReference type="Rhea" id="RHEA:42612"/>
        <dbReference type="Rhea" id="RHEA-COMP:9561"/>
        <dbReference type="Rhea" id="RHEA-COMP:9562"/>
        <dbReference type="ChEBI" id="CHEBI:15378"/>
        <dbReference type="ChEBI" id="CHEBI:17757"/>
        <dbReference type="ChEBI" id="CHEBI:57783"/>
        <dbReference type="ChEBI" id="CHEBI:58349"/>
        <dbReference type="ChEBI" id="CHEBI:62192"/>
    </reaction>
</comment>
<comment type="subunit">
    <text evidence="1">NDH is composed of at least 16 different subunits, 5 of which are encoded in the nucleus.</text>
</comment>
<comment type="subcellular location">
    <subcellularLocation>
        <location evidence="1">Plastid</location>
        <location evidence="1">Chloroplast thylakoid membrane</location>
        <topology evidence="1">Multi-pass membrane protein</topology>
    </subcellularLocation>
</comment>
<comment type="similarity">
    <text evidence="1">Belongs to the complex I subunit 3 family.</text>
</comment>
<keyword id="KW-0002">3D-structure</keyword>
<keyword id="KW-0150">Chloroplast</keyword>
<keyword id="KW-0472">Membrane</keyword>
<keyword id="KW-0520">NAD</keyword>
<keyword id="KW-0521">NADP</keyword>
<keyword id="KW-0934">Plastid</keyword>
<keyword id="KW-0618">Plastoquinone</keyword>
<keyword id="KW-0874">Quinone</keyword>
<keyword id="KW-0793">Thylakoid</keyword>
<keyword id="KW-1278">Translocase</keyword>
<keyword id="KW-0812">Transmembrane</keyword>
<keyword id="KW-1133">Transmembrane helix</keyword>
<keyword id="KW-0813">Transport</keyword>
<accession>A1E9J6</accession>
<accession>Q85XC4</accession>
<proteinExistence type="evidence at protein level"/>